<comment type="function">
    <text>Involved in the transposition of the insertion sequence.</text>
</comment>
<comment type="cofactor">
    <cofactor evidence="2">
        <name>a divalent metal cation</name>
        <dbReference type="ChEBI" id="CHEBI:60240"/>
    </cofactor>
</comment>
<comment type="similarity">
    <text evidence="2">Belongs to the transposase 11 family.</text>
</comment>
<sequence length="276" mass="32343">MKIEKAKQLTARKFKRMSGVSRQTFNYMVDVVKADEKKKKKPGRRPKLIIEDQVLMVIQYWREYRTYYHIGLDWGLSESAVCRTVYKIENILISSRKFSLPGKKELLKMPSQENLVVMDVTESPIERPKKSQKKFFSGKAGEHTLKTQLVIHQKTSQIICLGHGKGRIHDFRLFKTSGVKFSELLKVIADKGYQGITKIHKLSETPIKKPKGKKLAKEQKEYNRELNRLRIVVEHVNRRLKIFNILSNQYRNRHRRFGLRSNLIAGIYNYELALKA</sequence>
<name>T702_MICDP</name>
<keyword id="KW-0233">DNA recombination</keyword>
<keyword id="KW-0238">DNA-binding</keyword>
<keyword id="KW-0479">Metal-binding</keyword>
<keyword id="KW-0814">Transposable element</keyword>
<keyword id="KW-0815">Transposition</keyword>
<dbReference type="EMBL" id="X60384">
    <property type="protein sequence ID" value="CAA42935.1"/>
    <property type="molecule type" value="Genomic_DNA"/>
</dbReference>
<dbReference type="GO" id="GO:0003677">
    <property type="term" value="F:DNA binding"/>
    <property type="evidence" value="ECO:0007669"/>
    <property type="project" value="UniProtKB-KW"/>
</dbReference>
<dbReference type="GO" id="GO:0046872">
    <property type="term" value="F:metal ion binding"/>
    <property type="evidence" value="ECO:0007669"/>
    <property type="project" value="UniProtKB-KW"/>
</dbReference>
<dbReference type="GO" id="GO:0006310">
    <property type="term" value="P:DNA recombination"/>
    <property type="evidence" value="ECO:0007669"/>
    <property type="project" value="UniProtKB-KW"/>
</dbReference>
<dbReference type="GO" id="GO:0032196">
    <property type="term" value="P:transposition"/>
    <property type="evidence" value="ECO:0007669"/>
    <property type="project" value="UniProtKB-KW"/>
</dbReference>
<dbReference type="InterPro" id="IPR027806">
    <property type="entry name" value="HARBI1_dom"/>
</dbReference>
<dbReference type="InterPro" id="IPR047959">
    <property type="entry name" value="Transpos_IS5"/>
</dbReference>
<dbReference type="InterPro" id="IPR027805">
    <property type="entry name" value="Transposase_HTH_dom"/>
</dbReference>
<dbReference type="NCBIfam" id="NF033581">
    <property type="entry name" value="transpos_IS5_4"/>
    <property type="match status" value="1"/>
</dbReference>
<dbReference type="PANTHER" id="PTHR23080">
    <property type="entry name" value="THAP DOMAIN PROTEIN"/>
    <property type="match status" value="1"/>
</dbReference>
<dbReference type="Pfam" id="PF13359">
    <property type="entry name" value="DDE_Tnp_4"/>
    <property type="match status" value="1"/>
</dbReference>
<dbReference type="Pfam" id="PF13613">
    <property type="entry name" value="HTH_Tnp_4"/>
    <property type="match status" value="1"/>
</dbReference>
<protein>
    <recommendedName>
        <fullName>Probable transposase for insertion sequence element IS702</fullName>
    </recommendedName>
</protein>
<feature type="chain" id="PRO_0000173300" description="Probable transposase for insertion sequence element IS702">
    <location>
        <begin position="1"/>
        <end position="276"/>
    </location>
</feature>
<feature type="domain" description="DDE Tnp4" evidence="1">
    <location>
        <begin position="118"/>
        <end position="256"/>
    </location>
</feature>
<feature type="binding site" evidence="1">
    <location>
        <position position="119"/>
    </location>
    <ligand>
        <name>a divalent metal cation</name>
        <dbReference type="ChEBI" id="CHEBI:60240"/>
    </ligand>
</feature>
<feature type="binding site" evidence="1">
    <location>
        <position position="170"/>
    </location>
    <ligand>
        <name>a divalent metal cation</name>
        <dbReference type="ChEBI" id="CHEBI:60240"/>
    </ligand>
</feature>
<feature type="binding site" evidence="1">
    <location>
        <position position="190"/>
    </location>
    <ligand>
        <name>a divalent metal cation</name>
        <dbReference type="ChEBI" id="CHEBI:60240"/>
    </ligand>
</feature>
<feature type="binding site" evidence="1">
    <location>
        <position position="234"/>
    </location>
    <ligand>
        <name>a divalent metal cation</name>
        <dbReference type="ChEBI" id="CHEBI:60240"/>
    </ligand>
</feature>
<accession>Q00462</accession>
<organism>
    <name type="scientific">Microchaete diplosiphon</name>
    <name type="common">Fremyella diplosiphon</name>
    <dbReference type="NCBI Taxonomy" id="1197"/>
    <lineage>
        <taxon>Bacteria</taxon>
        <taxon>Bacillati</taxon>
        <taxon>Cyanobacteriota</taxon>
        <taxon>Cyanophyceae</taxon>
        <taxon>Nostocales</taxon>
        <taxon>Rivulariaceae</taxon>
        <taxon>Microchaete</taxon>
    </lineage>
</organism>
<evidence type="ECO:0000255" key="1"/>
<evidence type="ECO:0000305" key="2"/>
<reference key="1">
    <citation type="journal article" date="1991" name="Mol. Microbiol.">
        <title>Characterization of two insertion sequences, IS701 and IS702, from the cyanobacterium Calothrix species PCC 7601.</title>
        <authorList>
            <person name="Mazel D."/>
            <person name="Bernard C."/>
            <person name="Schwartz R."/>
            <person name="Castets A.M."/>
            <person name="Houmard J."/>
            <person name="Tandeau de Marsac N."/>
        </authorList>
    </citation>
    <scope>NUCLEOTIDE SEQUENCE [GENOMIC DNA]</scope>
</reference>
<proteinExistence type="inferred from homology"/>